<sequence length="432" mass="49203">MGRIGTPVFLAFLSALTCSLQVHAQVRDLKQCSNDPEFGRYCPTTCGVADVLSKYAKGVDEDSSFIDSVLTQLAAKHGIVEGNVNIVNEDVRITRDEAQIIKDSGQKTVQKILEEVRILEQIGVSHDAQIQELSEMWRVNQQFVTRLQQQLVDIRQTCSRSCQDTTANKISPITGKDCQQVVDNGGKDSGLYYIKPLKAKQPFLVFCEIENGNGWTVIQHRHDGSVNFTRDWVSYREGFGYLAPTLTTEFWLGNEKIHLLTGQQAYRLRIDLTDWENTHRYADYGHFKLTPESDEYRLFYSMYLDGDAGNAFDGFDFGDDPQDKFYTTHLGMLFSTPERDNDKYEGSCAEQDGSGWWMNRCHAGHLNGKYYFGGNYRKTDVEFPYDDGIIWATWHDRWYSLKMTTMKLLPMGRDLSGHGGQQQSKGNSRGDN</sequence>
<accession>P04115</accession>
<feature type="signal peptide" evidence="1">
    <location>
        <begin position="1"/>
        <end position="24"/>
    </location>
</feature>
<feature type="chain" id="PRO_0000009102" description="Fibrinogen gamma chain">
    <location>
        <begin position="25"/>
        <end position="432"/>
    </location>
</feature>
<feature type="domain" description="Fibrinogen C-terminal" evidence="3">
    <location>
        <begin position="169"/>
        <end position="412"/>
    </location>
</feature>
<feature type="region of interest" description="Disordered" evidence="4">
    <location>
        <begin position="413"/>
        <end position="432"/>
    </location>
</feature>
<feature type="compositionally biased region" description="Polar residues" evidence="4">
    <location>
        <begin position="421"/>
        <end position="432"/>
    </location>
</feature>
<feature type="binding site" evidence="5 6 7 8">
    <location>
        <position position="340"/>
    </location>
    <ligand>
        <name>Ca(2+)</name>
        <dbReference type="ChEBI" id="CHEBI:29108"/>
    </ligand>
</feature>
<feature type="binding site" evidence="5 6 7 8">
    <location>
        <position position="342"/>
    </location>
    <ligand>
        <name>Ca(2+)</name>
        <dbReference type="ChEBI" id="CHEBI:29108"/>
    </ligand>
</feature>
<feature type="binding site" evidence="5 6 7 8">
    <location>
        <position position="344"/>
    </location>
    <ligand>
        <name>Ca(2+)</name>
        <dbReference type="ChEBI" id="CHEBI:29108"/>
    </ligand>
</feature>
<feature type="binding site" evidence="5 6 7 8">
    <location>
        <position position="346"/>
    </location>
    <ligand>
        <name>Ca(2+)</name>
        <dbReference type="ChEBI" id="CHEBI:29108"/>
    </ligand>
</feature>
<feature type="glycosylation site" description="N-linked (GlcNAc...) asparagine" evidence="5 6">
    <location>
        <position position="227"/>
    </location>
</feature>
<feature type="disulfide bond" description="Interchain (with gamma chain)" evidence="3">
    <location>
        <position position="32"/>
    </location>
</feature>
<feature type="disulfide bond" description="Interchain (with beta chain)" evidence="3">
    <location>
        <position position="42"/>
    </location>
</feature>
<feature type="disulfide bond" description="Interchain (with alpha chain)" evidence="3">
    <location>
        <position position="46"/>
    </location>
</feature>
<feature type="disulfide bond" description="Interchain (with beta chain)">
    <location>
        <position position="158"/>
    </location>
</feature>
<feature type="disulfide bond" description="Interchain (with gamma chain)">
    <location>
        <position position="162"/>
    </location>
</feature>
<feature type="disulfide bond" evidence="5 6">
    <location>
        <begin position="178"/>
        <end position="207"/>
    </location>
</feature>
<feature type="disulfide bond" evidence="5 6">
    <location>
        <begin position="348"/>
        <end position="361"/>
    </location>
</feature>
<feature type="helix" evidence="9">
    <location>
        <begin position="108"/>
        <end position="157"/>
    </location>
</feature>
<feature type="helix" evidence="9">
    <location>
        <begin position="165"/>
        <end position="168"/>
    </location>
</feature>
<feature type="helix" evidence="9">
    <location>
        <begin position="178"/>
        <end position="182"/>
    </location>
</feature>
<feature type="turn" evidence="9">
    <location>
        <begin position="183"/>
        <end position="185"/>
    </location>
</feature>
<feature type="strand" evidence="9">
    <location>
        <begin position="188"/>
        <end position="194"/>
    </location>
</feature>
<feature type="strand" evidence="9">
    <location>
        <begin position="203"/>
        <end position="209"/>
    </location>
</feature>
<feature type="strand" evidence="9">
    <location>
        <begin position="214"/>
        <end position="224"/>
    </location>
</feature>
<feature type="helix" evidence="9">
    <location>
        <begin position="232"/>
        <end position="237"/>
    </location>
</feature>
<feature type="strand" evidence="9">
    <location>
        <begin position="239"/>
        <end position="242"/>
    </location>
</feature>
<feature type="strand" evidence="9">
    <location>
        <begin position="244"/>
        <end position="246"/>
    </location>
</feature>
<feature type="helix" evidence="9">
    <location>
        <begin position="254"/>
        <end position="261"/>
    </location>
</feature>
<feature type="strand" evidence="9">
    <location>
        <begin position="266"/>
        <end position="273"/>
    </location>
</feature>
<feature type="strand" evidence="9">
    <location>
        <begin position="279"/>
        <end position="289"/>
    </location>
</feature>
<feature type="helix" evidence="9">
    <location>
        <begin position="292"/>
        <end position="294"/>
    </location>
</feature>
<feature type="strand" evidence="9">
    <location>
        <begin position="303"/>
        <end position="305"/>
    </location>
</feature>
<feature type="strand" evidence="9">
    <location>
        <begin position="318"/>
        <end position="320"/>
    </location>
</feature>
<feature type="helix" evidence="9">
    <location>
        <begin position="323"/>
        <end position="326"/>
    </location>
</feature>
<feature type="strand" evidence="9">
    <location>
        <begin position="342"/>
        <end position="346"/>
    </location>
</feature>
<feature type="helix" evidence="9">
    <location>
        <begin position="348"/>
        <end position="352"/>
    </location>
</feature>
<feature type="strand" evidence="9">
    <location>
        <begin position="359"/>
        <end position="361"/>
    </location>
</feature>
<feature type="strand" evidence="9">
    <location>
        <begin position="363"/>
        <end position="368"/>
    </location>
</feature>
<feature type="strand" evidence="10">
    <location>
        <begin position="380"/>
        <end position="382"/>
    </location>
</feature>
<feature type="strand" evidence="9">
    <location>
        <begin position="388"/>
        <end position="391"/>
    </location>
</feature>
<feature type="helix" evidence="9">
    <location>
        <begin position="392"/>
        <end position="394"/>
    </location>
</feature>
<feature type="strand" evidence="9">
    <location>
        <begin position="402"/>
        <end position="412"/>
    </location>
</feature>
<feature type="strand" evidence="10">
    <location>
        <begin position="421"/>
        <end position="423"/>
    </location>
</feature>
<reference key="1">
    <citation type="journal article" date="1985" name="Biochemistry">
        <title>Lamprey fibrinogen gamma chain: cloning, cDNA sequencing, and general characterization.</title>
        <authorList>
            <person name="Strong D.D."/>
            <person name="Moore M."/>
            <person name="Cottrell B.A."/>
            <person name="Bohonus V.L."/>
            <person name="Pontes M."/>
            <person name="Evans B."/>
            <person name="Riley M."/>
            <person name="Doolittle R.F."/>
        </authorList>
    </citation>
    <scope>NUCLEOTIDE SEQUENCE [MRNA]</scope>
</reference>
<reference key="2">
    <citation type="journal article" date="2002" name="Biochemistry">
        <title>Crystal structure of fragment D from lamprey fibrinogen complexed with the peptide Gly-His-Arg-Pro-amide.</title>
        <authorList>
            <person name="Yang Z."/>
            <person name="Spraggon G."/>
            <person name="Pandi L."/>
            <person name="Everse S.J."/>
            <person name="Riley M."/>
            <person name="Doolittle R.F."/>
        </authorList>
    </citation>
    <scope>X-RAY CRYSTALLOGRAPHY (2.80 ANGSTROMS) OF 103-425 IN COMPLEX WITH CALCIUM</scope>
    <scope>DISULFIDE BONDS</scope>
    <scope>GLYCOSYLATION AT ASN-227</scope>
    <scope>SUBUNIT</scope>
</reference>
<reference key="3">
    <citation type="journal article" date="2002" name="Biochemistry">
        <title>The crystal structure of fragment double-D from cross-linked lamprey fibrin reveals isopeptide linkages across an unexpected D-D interface.</title>
        <authorList>
            <person name="Yang Z."/>
            <person name="Pandi L."/>
            <person name="Doolittle R.F."/>
        </authorList>
    </citation>
    <scope>X-RAY CRYSTALLOGRAPHY (2.90 ANGSTROMS) OF 103-432 IN COMPLEX WITH CALCIUM</scope>
    <scope>DISULFIDE BONDS</scope>
    <scope>GLYCOSYLATION AT ASN-227</scope>
    <scope>SUBCELLULAR LOCATION</scope>
    <scope>SUBUNIT</scope>
    <scope>COILED COIL DOMAIN</scope>
</reference>
<protein>
    <recommendedName>
        <fullName>Fibrinogen gamma chain</fullName>
    </recommendedName>
</protein>
<keyword id="KW-0002">3D-structure</keyword>
<keyword id="KW-0094">Blood coagulation</keyword>
<keyword id="KW-0106">Calcium</keyword>
<keyword id="KW-0175">Coiled coil</keyword>
<keyword id="KW-1015">Disulfide bond</keyword>
<keyword id="KW-0325">Glycoprotein</keyword>
<keyword id="KW-0356">Hemostasis</keyword>
<keyword id="KW-0479">Metal-binding</keyword>
<keyword id="KW-0964">Secreted</keyword>
<keyword id="KW-0732">Signal</keyword>
<gene>
    <name type="primary">FGG</name>
</gene>
<proteinExistence type="evidence at protein level"/>
<dbReference type="EMBL" id="K03049">
    <property type="protein sequence ID" value="AAA49262.1"/>
    <property type="molecule type" value="mRNA"/>
</dbReference>
<dbReference type="PIR" id="A03129">
    <property type="entry name" value="FGLMGS"/>
</dbReference>
<dbReference type="RefSeq" id="XP_032829633.1">
    <property type="nucleotide sequence ID" value="XM_032973742.1"/>
</dbReference>
<dbReference type="PDB" id="1LWU">
    <property type="method" value="X-ray"/>
    <property type="resolution" value="2.80 A"/>
    <property type="chains" value="C/F/I/L=103-425"/>
</dbReference>
<dbReference type="PDB" id="1N73">
    <property type="method" value="X-ray"/>
    <property type="resolution" value="2.90 A"/>
    <property type="chains" value="C/F=103-432"/>
</dbReference>
<dbReference type="PDBsum" id="1LWU"/>
<dbReference type="PDBsum" id="1N73"/>
<dbReference type="SMR" id="P04115"/>
<dbReference type="STRING" id="7757.ENSPMAP00000001295"/>
<dbReference type="GlyCosmos" id="P04115">
    <property type="glycosylation" value="1 site, No reported glycans"/>
</dbReference>
<dbReference type="iPTMnet" id="P04115"/>
<dbReference type="GeneID" id="103091840"/>
<dbReference type="OrthoDB" id="10063010at2759"/>
<dbReference type="EvolutionaryTrace" id="P04115"/>
<dbReference type="Proteomes" id="UP001318040">
    <property type="component" value="Chromosome 3"/>
</dbReference>
<dbReference type="GO" id="GO:0005577">
    <property type="term" value="C:fibrinogen complex"/>
    <property type="evidence" value="ECO:0007669"/>
    <property type="project" value="InterPro"/>
</dbReference>
<dbReference type="GO" id="GO:0005201">
    <property type="term" value="F:extracellular matrix structural constituent"/>
    <property type="evidence" value="ECO:0007669"/>
    <property type="project" value="TreeGrafter"/>
</dbReference>
<dbReference type="GO" id="GO:0046872">
    <property type="term" value="F:metal ion binding"/>
    <property type="evidence" value="ECO:0007669"/>
    <property type="project" value="UniProtKB-KW"/>
</dbReference>
<dbReference type="GO" id="GO:0030674">
    <property type="term" value="F:protein-macromolecule adaptor activity"/>
    <property type="evidence" value="ECO:0007669"/>
    <property type="project" value="TreeGrafter"/>
</dbReference>
<dbReference type="GO" id="GO:0005102">
    <property type="term" value="F:signaling receptor binding"/>
    <property type="evidence" value="ECO:0007669"/>
    <property type="project" value="InterPro"/>
</dbReference>
<dbReference type="GO" id="GO:0072377">
    <property type="term" value="P:blood coagulation, common pathway"/>
    <property type="evidence" value="ECO:0007669"/>
    <property type="project" value="TreeGrafter"/>
</dbReference>
<dbReference type="GO" id="GO:0042730">
    <property type="term" value="P:fibrinolysis"/>
    <property type="evidence" value="ECO:0007669"/>
    <property type="project" value="TreeGrafter"/>
</dbReference>
<dbReference type="GO" id="GO:0070527">
    <property type="term" value="P:platelet aggregation"/>
    <property type="evidence" value="ECO:0007669"/>
    <property type="project" value="TreeGrafter"/>
</dbReference>
<dbReference type="GO" id="GO:0034116">
    <property type="term" value="P:positive regulation of heterotypic cell-cell adhesion"/>
    <property type="evidence" value="ECO:0007669"/>
    <property type="project" value="TreeGrafter"/>
</dbReference>
<dbReference type="GO" id="GO:0051258">
    <property type="term" value="P:protein polymerization"/>
    <property type="evidence" value="ECO:0007669"/>
    <property type="project" value="InterPro"/>
</dbReference>
<dbReference type="CDD" id="cd00087">
    <property type="entry name" value="FReD"/>
    <property type="match status" value="1"/>
</dbReference>
<dbReference type="FunFam" id="4.10.530.10:FF:000002">
    <property type="entry name" value="Fibrinogen gamma chain"/>
    <property type="match status" value="1"/>
</dbReference>
<dbReference type="Gene3D" id="1.20.5.50">
    <property type="match status" value="2"/>
</dbReference>
<dbReference type="Gene3D" id="3.90.215.10">
    <property type="entry name" value="Gamma Fibrinogen, chain A, domain 1"/>
    <property type="match status" value="1"/>
</dbReference>
<dbReference type="Gene3D" id="4.10.530.10">
    <property type="entry name" value="Gamma-fibrinogen Carboxyl Terminal Fragment, domain 2"/>
    <property type="match status" value="1"/>
</dbReference>
<dbReference type="InterPro" id="IPR037579">
    <property type="entry name" value="FIB_ANG-like"/>
</dbReference>
<dbReference type="InterPro" id="IPR036056">
    <property type="entry name" value="Fibrinogen-like_C"/>
</dbReference>
<dbReference type="InterPro" id="IPR014716">
    <property type="entry name" value="Fibrinogen_a/b/g_C_1"/>
</dbReference>
<dbReference type="InterPro" id="IPR002181">
    <property type="entry name" value="Fibrinogen_a/b/g_C_dom"/>
</dbReference>
<dbReference type="InterPro" id="IPR012290">
    <property type="entry name" value="Fibrinogen_a/b/g_coil_dom"/>
</dbReference>
<dbReference type="InterPro" id="IPR020837">
    <property type="entry name" value="Fibrinogen_CS"/>
</dbReference>
<dbReference type="PANTHER" id="PTHR47221">
    <property type="entry name" value="FIBRINOGEN ALPHA CHAIN"/>
    <property type="match status" value="1"/>
</dbReference>
<dbReference type="PANTHER" id="PTHR47221:SF9">
    <property type="entry name" value="FIBRINOGEN GAMMA CHAIN"/>
    <property type="match status" value="1"/>
</dbReference>
<dbReference type="Pfam" id="PF08702">
    <property type="entry name" value="Fib_alpha"/>
    <property type="match status" value="1"/>
</dbReference>
<dbReference type="Pfam" id="PF00147">
    <property type="entry name" value="Fibrinogen_C"/>
    <property type="match status" value="1"/>
</dbReference>
<dbReference type="SMART" id="SM00186">
    <property type="entry name" value="FBG"/>
    <property type="match status" value="1"/>
</dbReference>
<dbReference type="SMART" id="SM01212">
    <property type="entry name" value="Fib_alpha"/>
    <property type="match status" value="1"/>
</dbReference>
<dbReference type="SUPFAM" id="SSF56496">
    <property type="entry name" value="Fibrinogen C-terminal domain-like"/>
    <property type="match status" value="1"/>
</dbReference>
<dbReference type="SUPFAM" id="SSF58010">
    <property type="entry name" value="Fibrinogen coiled-coil and central regions"/>
    <property type="match status" value="1"/>
</dbReference>
<dbReference type="PROSITE" id="PS00514">
    <property type="entry name" value="FIBRINOGEN_C_1"/>
    <property type="match status" value="1"/>
</dbReference>
<dbReference type="PROSITE" id="PS51406">
    <property type="entry name" value="FIBRINOGEN_C_2"/>
    <property type="match status" value="1"/>
</dbReference>
<evidence type="ECO:0000250" key="1"/>
<evidence type="ECO:0000250" key="2">
    <source>
        <dbReference type="UniProtKB" id="E9PV24"/>
    </source>
</evidence>
<evidence type="ECO:0000255" key="3">
    <source>
        <dbReference type="PROSITE-ProRule" id="PRU00739"/>
    </source>
</evidence>
<evidence type="ECO:0000256" key="4">
    <source>
        <dbReference type="SAM" id="MobiDB-lite"/>
    </source>
</evidence>
<evidence type="ECO:0000269" key="5">
    <source>
    </source>
</evidence>
<evidence type="ECO:0000269" key="6">
    <source>
    </source>
</evidence>
<evidence type="ECO:0007744" key="7">
    <source>
        <dbReference type="PDB" id="1LWU"/>
    </source>
</evidence>
<evidence type="ECO:0007744" key="8">
    <source>
        <dbReference type="PDB" id="1N73"/>
    </source>
</evidence>
<evidence type="ECO:0007829" key="9">
    <source>
        <dbReference type="PDB" id="1LWU"/>
    </source>
</evidence>
<evidence type="ECO:0007829" key="10">
    <source>
        <dbReference type="PDB" id="1N73"/>
    </source>
</evidence>
<comment type="function">
    <text evidence="2">Together with fibrinogen alpha (FGA) and fibrinogen beta (FGB), polymerizes to form an insoluble fibrin matrix. Has a major function in hemostasis as one of the primary components of blood clots.</text>
</comment>
<comment type="subunit">
    <text evidence="5 6">Heterohexamer; disulfide linked. Contains 2 sets of 3 non-identical chains (alpha, beta and gamma). The 2 heterotrimers are in head to head conformation with the N-termini in a small central domain.</text>
</comment>
<comment type="subcellular location">
    <subcellularLocation>
        <location evidence="6">Secreted</location>
    </subcellularLocation>
</comment>
<comment type="domain">
    <text evidence="5 6">A long coiled coil structure formed by 3 polypeptide chains connects the central nodule to the C-terminal domains (distal nodules). The long C-terminal ends of the alpha chains fold back, contributing a fourth strand to the coiled coil structure.</text>
</comment>
<comment type="PTM">
    <text>Conversion of fibrinogen to fibrin is triggered by thrombin, which cleaves fibrinopeptides A and B from alpha and beta chains, and thus exposes the N-terminal polymerization sites responsible for the formation of the soft clot. The soft clot is converted into the hard clot by factor XIIIA which catalyzes the epsilon-(gamma-glutamyl)lysine cross-linking between gamma chains (stronger) and between alpha chains (weaker) of different monomers.</text>
</comment>
<organism>
    <name type="scientific">Petromyzon marinus</name>
    <name type="common">Sea lamprey</name>
    <dbReference type="NCBI Taxonomy" id="7757"/>
    <lineage>
        <taxon>Eukaryota</taxon>
        <taxon>Metazoa</taxon>
        <taxon>Chordata</taxon>
        <taxon>Craniata</taxon>
        <taxon>Vertebrata</taxon>
        <taxon>Cyclostomata</taxon>
        <taxon>Hyperoartia</taxon>
        <taxon>Petromyzontiformes</taxon>
        <taxon>Petromyzontidae</taxon>
        <taxon>Petromyzon</taxon>
    </lineage>
</organism>
<name>FIBG_PETMA</name>